<protein>
    <recommendedName>
        <fullName evidence="1">Succinate--CoA ligase [GDP-forming] subunit beta, mitochondrial</fullName>
        <ecNumber evidence="1">6.2.1.4</ecNumber>
    </recommendedName>
    <alternativeName>
        <fullName evidence="1">GTP-specific succinyl-CoA synthetase subunit beta</fullName>
        <shortName evidence="1">G-SCS</shortName>
        <shortName evidence="1">GTPSCS</shortName>
    </alternativeName>
    <alternativeName>
        <fullName evidence="1">Succinyl-CoA synthetase beta-G chain</fullName>
        <shortName evidence="1">SCS-betaG</shortName>
    </alternativeName>
</protein>
<reference key="1">
    <citation type="journal article" date="2002" name="Nature">
        <title>Sequence and analysis of chromosome 2 of Dictyostelium discoideum.</title>
        <authorList>
            <person name="Gloeckner G."/>
            <person name="Eichinger L."/>
            <person name="Szafranski K."/>
            <person name="Pachebat J.A."/>
            <person name="Bankier A.T."/>
            <person name="Dear P.H."/>
            <person name="Lehmann R."/>
            <person name="Baumgart C."/>
            <person name="Parra G."/>
            <person name="Abril J.F."/>
            <person name="Guigo R."/>
            <person name="Kumpf K."/>
            <person name="Tunggal B."/>
            <person name="Cox E.C."/>
            <person name="Quail M.A."/>
            <person name="Platzer M."/>
            <person name="Rosenthal A."/>
            <person name="Noegel A.A."/>
        </authorList>
    </citation>
    <scope>NUCLEOTIDE SEQUENCE [LARGE SCALE GENOMIC DNA]</scope>
    <source>
        <strain>AX4</strain>
    </source>
</reference>
<reference key="2">
    <citation type="journal article" date="2005" name="Nature">
        <title>The genome of the social amoeba Dictyostelium discoideum.</title>
        <authorList>
            <person name="Eichinger L."/>
            <person name="Pachebat J.A."/>
            <person name="Gloeckner G."/>
            <person name="Rajandream M.A."/>
            <person name="Sucgang R."/>
            <person name="Berriman M."/>
            <person name="Song J."/>
            <person name="Olsen R."/>
            <person name="Szafranski K."/>
            <person name="Xu Q."/>
            <person name="Tunggal B."/>
            <person name="Kummerfeld S."/>
            <person name="Madera M."/>
            <person name="Konfortov B.A."/>
            <person name="Rivero F."/>
            <person name="Bankier A.T."/>
            <person name="Lehmann R."/>
            <person name="Hamlin N."/>
            <person name="Davies R."/>
            <person name="Gaudet P."/>
            <person name="Fey P."/>
            <person name="Pilcher K."/>
            <person name="Chen G."/>
            <person name="Saunders D."/>
            <person name="Sodergren E.J."/>
            <person name="Davis P."/>
            <person name="Kerhornou A."/>
            <person name="Nie X."/>
            <person name="Hall N."/>
            <person name="Anjard C."/>
            <person name="Hemphill L."/>
            <person name="Bason N."/>
            <person name="Farbrother P."/>
            <person name="Desany B."/>
            <person name="Just E."/>
            <person name="Morio T."/>
            <person name="Rost R."/>
            <person name="Churcher C.M."/>
            <person name="Cooper J."/>
            <person name="Haydock S."/>
            <person name="van Driessche N."/>
            <person name="Cronin A."/>
            <person name="Goodhead I."/>
            <person name="Muzny D.M."/>
            <person name="Mourier T."/>
            <person name="Pain A."/>
            <person name="Lu M."/>
            <person name="Harper D."/>
            <person name="Lindsay R."/>
            <person name="Hauser H."/>
            <person name="James K.D."/>
            <person name="Quiles M."/>
            <person name="Madan Babu M."/>
            <person name="Saito T."/>
            <person name="Buchrieser C."/>
            <person name="Wardroper A."/>
            <person name="Felder M."/>
            <person name="Thangavelu M."/>
            <person name="Johnson D."/>
            <person name="Knights A."/>
            <person name="Loulseged H."/>
            <person name="Mungall K.L."/>
            <person name="Oliver K."/>
            <person name="Price C."/>
            <person name="Quail M.A."/>
            <person name="Urushihara H."/>
            <person name="Hernandez J."/>
            <person name="Rabbinowitsch E."/>
            <person name="Steffen D."/>
            <person name="Sanders M."/>
            <person name="Ma J."/>
            <person name="Kohara Y."/>
            <person name="Sharp S."/>
            <person name="Simmonds M.N."/>
            <person name="Spiegler S."/>
            <person name="Tivey A."/>
            <person name="Sugano S."/>
            <person name="White B."/>
            <person name="Walker D."/>
            <person name="Woodward J.R."/>
            <person name="Winckler T."/>
            <person name="Tanaka Y."/>
            <person name="Shaulsky G."/>
            <person name="Schleicher M."/>
            <person name="Weinstock G.M."/>
            <person name="Rosenthal A."/>
            <person name="Cox E.C."/>
            <person name="Chisholm R.L."/>
            <person name="Gibbs R.A."/>
            <person name="Loomis W.F."/>
            <person name="Platzer M."/>
            <person name="Kay R.R."/>
            <person name="Williams J.G."/>
            <person name="Dear P.H."/>
            <person name="Noegel A.A."/>
            <person name="Barrell B.G."/>
            <person name="Kuspa A."/>
        </authorList>
    </citation>
    <scope>NUCLEOTIDE SEQUENCE [LARGE SCALE GENOMIC DNA]</scope>
    <source>
        <strain>AX4</strain>
    </source>
</reference>
<accession>Q869S7</accession>
<accession>Q554Z0</accession>
<gene>
    <name type="primary">scsB</name>
    <name type="synonym">suclg2</name>
    <name type="ORF">DDB_G0274449</name>
</gene>
<sequence>MSLFNSANKVIGGVLKFNPSKYQVRYLNLHEYQSKSLMDKYGVNTQKWRVVTKASDAIKAASELNGELVVKAQVHAGGRGKGSFIETGFKGGVHLCKTGKEAERLCDEMLGKHLVTKQTTKEGTKVQSVMLAESVDPKRELYFAIVMDRKYGGPVMIASPQGGVDIESVAEETPDLIFKEPIDIVKGIRPEQTKNLAEKLGFTGEKAKIAQQQMENLYQLFIKSDATQVEINPFAETTDGQVICMDAKINFDDNASFRQKEIFEMRDTAEEDPREVEAGKFGLNYIGLDGNIGCMVNGAGLAMATMDIIKLKGGIPANFLDVGGSASEQAVTEAFKILTKDPRVKCLLVNIFGGIMKCDIIASGIVNASKQVGLKIPLVVRLEGTNVNIGKEILEKSGLNITSASDLDDAAIKAVNCLKK</sequence>
<dbReference type="EC" id="6.2.1.4" evidence="1"/>
<dbReference type="EMBL" id="AAFI02000012">
    <property type="protein sequence ID" value="EAL70117.1"/>
    <property type="molecule type" value="Genomic_DNA"/>
</dbReference>
<dbReference type="RefSeq" id="XP_644183.1">
    <property type="nucleotide sequence ID" value="XM_639091.1"/>
</dbReference>
<dbReference type="SMR" id="Q869S7"/>
<dbReference type="FunCoup" id="Q869S7">
    <property type="interactions" value="618"/>
</dbReference>
<dbReference type="STRING" id="44689.Q869S7"/>
<dbReference type="PaxDb" id="44689-DDB0231358"/>
<dbReference type="EnsemblProtists" id="EAL70117">
    <property type="protein sequence ID" value="EAL70117"/>
    <property type="gene ID" value="DDB_G0274449"/>
</dbReference>
<dbReference type="GeneID" id="8619612"/>
<dbReference type="KEGG" id="ddi:DDB_G0274449"/>
<dbReference type="dictyBase" id="DDB_G0274449">
    <property type="gene designation" value="scsB"/>
</dbReference>
<dbReference type="VEuPathDB" id="AmoebaDB:DDB_G0274449"/>
<dbReference type="eggNOG" id="KOG1447">
    <property type="taxonomic scope" value="Eukaryota"/>
</dbReference>
<dbReference type="HOGENOM" id="CLU_037430_0_2_1"/>
<dbReference type="InParanoid" id="Q869S7"/>
<dbReference type="OMA" id="KQMIGNR"/>
<dbReference type="PhylomeDB" id="Q869S7"/>
<dbReference type="Reactome" id="R-DDI-71403">
    <property type="pathway name" value="Citric acid cycle (TCA cycle)"/>
</dbReference>
<dbReference type="UniPathway" id="UPA00223">
    <property type="reaction ID" value="UER00999"/>
</dbReference>
<dbReference type="PRO" id="PR:Q869S7"/>
<dbReference type="Proteomes" id="UP000002195">
    <property type="component" value="Chromosome 2"/>
</dbReference>
<dbReference type="GO" id="GO:0005739">
    <property type="term" value="C:mitochondrion"/>
    <property type="evidence" value="ECO:0000250"/>
    <property type="project" value="dictyBase"/>
</dbReference>
<dbReference type="GO" id="GO:0042709">
    <property type="term" value="C:succinate-CoA ligase complex"/>
    <property type="evidence" value="ECO:0000318"/>
    <property type="project" value="GO_Central"/>
</dbReference>
<dbReference type="GO" id="GO:0005524">
    <property type="term" value="F:ATP binding"/>
    <property type="evidence" value="ECO:0007669"/>
    <property type="project" value="InterPro"/>
</dbReference>
<dbReference type="GO" id="GO:0005525">
    <property type="term" value="F:GTP binding"/>
    <property type="evidence" value="ECO:0007669"/>
    <property type="project" value="UniProtKB-UniRule"/>
</dbReference>
<dbReference type="GO" id="GO:0000287">
    <property type="term" value="F:magnesium ion binding"/>
    <property type="evidence" value="ECO:0007669"/>
    <property type="project" value="UniProtKB-UniRule"/>
</dbReference>
<dbReference type="GO" id="GO:0004776">
    <property type="term" value="F:succinate-CoA ligase (GDP-forming) activity"/>
    <property type="evidence" value="ECO:0000318"/>
    <property type="project" value="GO_Central"/>
</dbReference>
<dbReference type="GO" id="GO:0006104">
    <property type="term" value="P:succinyl-CoA metabolic process"/>
    <property type="evidence" value="ECO:0000318"/>
    <property type="project" value="GO_Central"/>
</dbReference>
<dbReference type="GO" id="GO:0006099">
    <property type="term" value="P:tricarboxylic acid cycle"/>
    <property type="evidence" value="ECO:0000318"/>
    <property type="project" value="GO_Central"/>
</dbReference>
<dbReference type="FunFam" id="3.30.1490.20:FF:000002">
    <property type="entry name" value="Succinate--CoA ligase [ADP-forming] subunit beta"/>
    <property type="match status" value="1"/>
</dbReference>
<dbReference type="FunFam" id="3.30.470.20:FF:000002">
    <property type="entry name" value="Succinate--CoA ligase [ADP-forming] subunit beta"/>
    <property type="match status" value="1"/>
</dbReference>
<dbReference type="FunFam" id="3.40.50.261:FF:000001">
    <property type="entry name" value="Succinate--CoA ligase [ADP-forming] subunit beta"/>
    <property type="match status" value="1"/>
</dbReference>
<dbReference type="Gene3D" id="3.30.1490.20">
    <property type="entry name" value="ATP-grasp fold, A domain"/>
    <property type="match status" value="1"/>
</dbReference>
<dbReference type="Gene3D" id="3.30.470.20">
    <property type="entry name" value="ATP-grasp fold, B domain"/>
    <property type="match status" value="1"/>
</dbReference>
<dbReference type="Gene3D" id="3.40.50.261">
    <property type="entry name" value="Succinyl-CoA synthetase domains"/>
    <property type="match status" value="1"/>
</dbReference>
<dbReference type="HAMAP" id="MF_00558">
    <property type="entry name" value="Succ_CoA_beta"/>
    <property type="match status" value="1"/>
</dbReference>
<dbReference type="HAMAP" id="MF_03221">
    <property type="entry name" value="Succ_CoA_betaG_euk"/>
    <property type="match status" value="1"/>
</dbReference>
<dbReference type="InterPro" id="IPR011761">
    <property type="entry name" value="ATP-grasp"/>
</dbReference>
<dbReference type="InterPro" id="IPR013650">
    <property type="entry name" value="ATP-grasp_succ-CoA_synth-type"/>
</dbReference>
<dbReference type="InterPro" id="IPR013815">
    <property type="entry name" value="ATP_grasp_subdomain_1"/>
</dbReference>
<dbReference type="InterPro" id="IPR017866">
    <property type="entry name" value="Succ-CoA_synthase_bsu_CS"/>
</dbReference>
<dbReference type="InterPro" id="IPR005811">
    <property type="entry name" value="SUCC_ACL_C"/>
</dbReference>
<dbReference type="InterPro" id="IPR034722">
    <property type="entry name" value="Succ_CoA_betaG_euk"/>
</dbReference>
<dbReference type="InterPro" id="IPR005809">
    <property type="entry name" value="Succ_CoA_ligase-like_bsu"/>
</dbReference>
<dbReference type="InterPro" id="IPR016102">
    <property type="entry name" value="Succinyl-CoA_synth-like"/>
</dbReference>
<dbReference type="NCBIfam" id="NF001913">
    <property type="entry name" value="PRK00696.1"/>
    <property type="match status" value="1"/>
</dbReference>
<dbReference type="NCBIfam" id="TIGR01016">
    <property type="entry name" value="sucCoAbeta"/>
    <property type="match status" value="1"/>
</dbReference>
<dbReference type="PANTHER" id="PTHR11815:SF10">
    <property type="entry name" value="SUCCINATE--COA LIGASE [GDP-FORMING] SUBUNIT BETA, MITOCHONDRIAL"/>
    <property type="match status" value="1"/>
</dbReference>
<dbReference type="PANTHER" id="PTHR11815">
    <property type="entry name" value="SUCCINYL-COA SYNTHETASE BETA CHAIN"/>
    <property type="match status" value="1"/>
</dbReference>
<dbReference type="Pfam" id="PF08442">
    <property type="entry name" value="ATP-grasp_2"/>
    <property type="match status" value="1"/>
</dbReference>
<dbReference type="Pfam" id="PF00549">
    <property type="entry name" value="Ligase_CoA"/>
    <property type="match status" value="1"/>
</dbReference>
<dbReference type="PIRSF" id="PIRSF001554">
    <property type="entry name" value="SucCS_beta"/>
    <property type="match status" value="1"/>
</dbReference>
<dbReference type="SUPFAM" id="SSF56059">
    <property type="entry name" value="Glutathione synthetase ATP-binding domain-like"/>
    <property type="match status" value="1"/>
</dbReference>
<dbReference type="SUPFAM" id="SSF52210">
    <property type="entry name" value="Succinyl-CoA synthetase domains"/>
    <property type="match status" value="1"/>
</dbReference>
<dbReference type="PROSITE" id="PS50975">
    <property type="entry name" value="ATP_GRASP"/>
    <property type="match status" value="1"/>
</dbReference>
<dbReference type="PROSITE" id="PS01217">
    <property type="entry name" value="SUCCINYL_COA_LIG_3"/>
    <property type="match status" value="1"/>
</dbReference>
<comment type="function">
    <text evidence="1">GTP-specific succinyl-CoA synthetase functions in the citric acid cycle (TCA), coupling the hydrolysis of succinyl-CoA to the synthesis of GTP and thus represents the only step of substrate-level phosphorylation in the TCA. The beta subunit provides nucleotide specificity of the enzyme and binds the substrate succinate, while the binding sites for coenzyme A and phosphate are found in the alpha subunit.</text>
</comment>
<comment type="catalytic activity">
    <reaction evidence="1">
        <text>GTP + succinate + CoA = succinyl-CoA + GDP + phosphate</text>
        <dbReference type="Rhea" id="RHEA:22120"/>
        <dbReference type="ChEBI" id="CHEBI:30031"/>
        <dbReference type="ChEBI" id="CHEBI:37565"/>
        <dbReference type="ChEBI" id="CHEBI:43474"/>
        <dbReference type="ChEBI" id="CHEBI:57287"/>
        <dbReference type="ChEBI" id="CHEBI:57292"/>
        <dbReference type="ChEBI" id="CHEBI:58189"/>
        <dbReference type="EC" id="6.2.1.4"/>
    </reaction>
</comment>
<comment type="cofactor">
    <cofactor evidence="1">
        <name>Mg(2+)</name>
        <dbReference type="ChEBI" id="CHEBI:18420"/>
    </cofactor>
    <text evidence="1">Binds 1 Mg(2+) ion per subunit.</text>
</comment>
<comment type="pathway">
    <text evidence="1">Carbohydrate metabolism; tricarboxylic acid cycle; succinate from succinyl-CoA (ligase route): step 1/1.</text>
</comment>
<comment type="subunit">
    <text evidence="1">Heterodimer of an alpha and a beta subunit. The beta subunit determines specificity for GTP.</text>
</comment>
<comment type="subcellular location">
    <subcellularLocation>
        <location evidence="1">Mitochondrion</location>
    </subcellularLocation>
</comment>
<comment type="miscellaneous">
    <text evidence="1">This protein may be expected to contain an N-terminal transit peptide but none has been predicted.</text>
</comment>
<comment type="similarity">
    <text evidence="1">Belongs to the succinate/malate CoA ligase beta subunit family. GTP-specific subunit beta subfamily.</text>
</comment>
<organism>
    <name type="scientific">Dictyostelium discoideum</name>
    <name type="common">Social amoeba</name>
    <dbReference type="NCBI Taxonomy" id="44689"/>
    <lineage>
        <taxon>Eukaryota</taxon>
        <taxon>Amoebozoa</taxon>
        <taxon>Evosea</taxon>
        <taxon>Eumycetozoa</taxon>
        <taxon>Dictyostelia</taxon>
        <taxon>Dictyosteliales</taxon>
        <taxon>Dictyosteliaceae</taxon>
        <taxon>Dictyostelium</taxon>
    </lineage>
</organism>
<name>SUCB2_DICDI</name>
<keyword id="KW-0342">GTP-binding</keyword>
<keyword id="KW-0436">Ligase</keyword>
<keyword id="KW-0460">Magnesium</keyword>
<keyword id="KW-0479">Metal-binding</keyword>
<keyword id="KW-0496">Mitochondrion</keyword>
<keyword id="KW-0547">Nucleotide-binding</keyword>
<keyword id="KW-1185">Reference proteome</keyword>
<keyword id="KW-0816">Tricarboxylic acid cycle</keyword>
<evidence type="ECO:0000255" key="1">
    <source>
        <dbReference type="HAMAP-Rule" id="MF_03221"/>
    </source>
</evidence>
<proteinExistence type="inferred from homology"/>
<feature type="chain" id="PRO_0000328366" description="Succinate--CoA ligase [GDP-forming] subunit beta, mitochondrial">
    <location>
        <begin position="1"/>
        <end position="420"/>
    </location>
</feature>
<feature type="domain" description="ATP-grasp" evidence="1">
    <location>
        <begin position="35"/>
        <end position="263"/>
    </location>
</feature>
<feature type="binding site" evidence="1">
    <location>
        <position position="46"/>
    </location>
    <ligand>
        <name>GTP</name>
        <dbReference type="ChEBI" id="CHEBI:37565"/>
    </ligand>
</feature>
<feature type="binding site" evidence="1">
    <location>
        <begin position="78"/>
        <end position="80"/>
    </location>
    <ligand>
        <name>GTP</name>
        <dbReference type="ChEBI" id="CHEBI:37565"/>
    </ligand>
</feature>
<feature type="binding site" evidence="1">
    <location>
        <position position="135"/>
    </location>
    <ligand>
        <name>GTP</name>
        <dbReference type="ChEBI" id="CHEBI:37565"/>
    </ligand>
</feature>
<feature type="binding site" evidence="1">
    <location>
        <position position="232"/>
    </location>
    <ligand>
        <name>Mg(2+)</name>
        <dbReference type="ChEBI" id="CHEBI:18420"/>
    </ligand>
</feature>
<feature type="binding site" evidence="1">
    <location>
        <position position="246"/>
    </location>
    <ligand>
        <name>Mg(2+)</name>
        <dbReference type="ChEBI" id="CHEBI:18420"/>
    </ligand>
</feature>
<feature type="binding site" evidence="1">
    <location>
        <position position="297"/>
    </location>
    <ligand>
        <name>substrate</name>
        <note>ligand shared with subunit alpha</note>
    </ligand>
</feature>
<feature type="binding site" evidence="1">
    <location>
        <begin position="354"/>
        <end position="356"/>
    </location>
    <ligand>
        <name>substrate</name>
        <note>ligand shared with subunit alpha</note>
    </ligand>
</feature>
<feature type="site" description="Important for substrate specificity" evidence="1">
    <location>
        <position position="67"/>
    </location>
</feature>
<feature type="site" description="Important for substrate specificity" evidence="1">
    <location>
        <position position="136"/>
    </location>
</feature>